<comment type="function">
    <text evidence="1">Functions as a PqqA binding protein and presents PqqA to PqqE, in the pyrroloquinoline quinone (PQQ) biosynthetic pathway.</text>
</comment>
<comment type="pathway">
    <text evidence="1">Cofactor biosynthesis; pyrroloquinoline quinone biosynthesis.</text>
</comment>
<comment type="subunit">
    <text evidence="1">Monomer. Interacts with PqqE.</text>
</comment>
<comment type="similarity">
    <text evidence="1">Belongs to the PqqD family.</text>
</comment>
<proteinExistence type="inferred from homology"/>
<protein>
    <recommendedName>
        <fullName evidence="1">PqqA binding protein</fullName>
    </recommendedName>
    <alternativeName>
        <fullName evidence="1">Coenzyme PQQ synthesis protein D</fullName>
    </alternativeName>
    <alternativeName>
        <fullName evidence="1">Pyrroloquinoline quinone biosynthesis protein D</fullName>
    </alternativeName>
</protein>
<gene>
    <name evidence="1" type="primary">pqqD</name>
</gene>
<evidence type="ECO:0000255" key="1">
    <source>
        <dbReference type="HAMAP-Rule" id="MF_00655"/>
    </source>
</evidence>
<reference key="1">
    <citation type="journal article" date="1998" name="FEMS Microbiol. Lett.">
        <title>Expression of genes from Rahnella aquatilis that are necessary for mineral phosphate solubilization in Escherichia coli.</title>
        <authorList>
            <person name="Kim K.Y."/>
            <person name="Jordan D."/>
            <person name="Krishnan H.B."/>
        </authorList>
    </citation>
    <scope>NUCLEOTIDE SEQUENCE [GENOMIC DNA]</scope>
    <source>
        <strain>ISL19</strain>
    </source>
</reference>
<organism>
    <name type="scientific">Rahnella aquatilis</name>
    <dbReference type="NCBI Taxonomy" id="34038"/>
    <lineage>
        <taxon>Bacteria</taxon>
        <taxon>Pseudomonadati</taxon>
        <taxon>Pseudomonadota</taxon>
        <taxon>Gammaproteobacteria</taxon>
        <taxon>Enterobacterales</taxon>
        <taxon>Yersiniaceae</taxon>
        <taxon>Rahnella</taxon>
    </lineage>
</organism>
<accession>O33505</accession>
<sequence>MITITEHYTPMFRRGYRMQFEKTQDCHVILYPEGMAKLNDSATFILQLVDGERTIANIIDELNERFPEAGGVNDDVKDFFAQAHAQKWITFREPA</sequence>
<feature type="chain" id="PRO_0000219969" description="PqqA binding protein">
    <location>
        <begin position="1"/>
        <end position="95"/>
    </location>
</feature>
<keyword id="KW-0884">PQQ biosynthesis</keyword>
<name>PQQD_RAHAQ</name>
<dbReference type="EMBL" id="AF007584">
    <property type="protein sequence ID" value="AAC38152.1"/>
    <property type="molecule type" value="Genomic_DNA"/>
</dbReference>
<dbReference type="SMR" id="O33505"/>
<dbReference type="UniPathway" id="UPA00539"/>
<dbReference type="GO" id="GO:0048038">
    <property type="term" value="F:quinone binding"/>
    <property type="evidence" value="ECO:0007669"/>
    <property type="project" value="InterPro"/>
</dbReference>
<dbReference type="GO" id="GO:0018189">
    <property type="term" value="P:pyrroloquinoline quinone biosynthetic process"/>
    <property type="evidence" value="ECO:0007669"/>
    <property type="project" value="UniProtKB-UniRule"/>
</dbReference>
<dbReference type="Gene3D" id="1.10.10.1150">
    <property type="entry name" value="Coenzyme PQQ synthesis protein D (PqqD)"/>
    <property type="match status" value="1"/>
</dbReference>
<dbReference type="HAMAP" id="MF_00655">
    <property type="entry name" value="PQQ_syn_PqqD"/>
    <property type="match status" value="1"/>
</dbReference>
<dbReference type="InterPro" id="IPR008792">
    <property type="entry name" value="PQQD"/>
</dbReference>
<dbReference type="InterPro" id="IPR022479">
    <property type="entry name" value="PqqD_bac"/>
</dbReference>
<dbReference type="InterPro" id="IPR041881">
    <property type="entry name" value="PqqD_sf"/>
</dbReference>
<dbReference type="NCBIfam" id="TIGR03859">
    <property type="entry name" value="PQQ_PqqD"/>
    <property type="match status" value="1"/>
</dbReference>
<dbReference type="NCBIfam" id="NF002535">
    <property type="entry name" value="PRK02079.1"/>
    <property type="match status" value="1"/>
</dbReference>
<dbReference type="Pfam" id="PF05402">
    <property type="entry name" value="PqqD"/>
    <property type="match status" value="1"/>
</dbReference>